<sequence length="346" mass="38656">MAIDLKKHKSRRIILTKQGKRTERHIPVLLQPVLAGLIPLVGAKVIDGTFGAGGYTRALLNAGAQVIALDRDPHAIREGQSLVDEFFPRLRLVQGNFSQLDCVVEEKVDAVILDIGVSSMQLDEAERGFSFQKDGPLDMRMAQTGFTAADVVNRLKSDELARIFKILGEERYARRIARMIEKRRCVQPFLRTGDLAHAIEVLVGRKSGERIHPATRVFQALRIYVNDEIGELARGLFAAERVLKPGGRLGVVSFHSLEDRMVKRFFSARSGESVRSRYLPEIEMAPATFFPLFKGGITANKEELERNPRSRSARLRIGVRTEAECLFADMKLFGLAKIASFEGGKK</sequence>
<keyword id="KW-0963">Cytoplasm</keyword>
<keyword id="KW-0489">Methyltransferase</keyword>
<keyword id="KW-0698">rRNA processing</keyword>
<keyword id="KW-0949">S-adenosyl-L-methionine</keyword>
<keyword id="KW-0808">Transferase</keyword>
<dbReference type="EC" id="2.1.1.199" evidence="1"/>
<dbReference type="EMBL" id="BX897699">
    <property type="protein sequence ID" value="CAF27917.1"/>
    <property type="molecule type" value="Genomic_DNA"/>
</dbReference>
<dbReference type="SMR" id="Q6G2P7"/>
<dbReference type="PaxDb" id="283166-BH11320"/>
<dbReference type="EnsemblBacteria" id="CAF27917">
    <property type="protein sequence ID" value="CAF27917"/>
    <property type="gene ID" value="BH11320"/>
</dbReference>
<dbReference type="KEGG" id="bhe:BH11320"/>
<dbReference type="eggNOG" id="COG0275">
    <property type="taxonomic scope" value="Bacteria"/>
</dbReference>
<dbReference type="OrthoDB" id="9806637at2"/>
<dbReference type="Proteomes" id="UP000000421">
    <property type="component" value="Chromosome"/>
</dbReference>
<dbReference type="GO" id="GO:0005737">
    <property type="term" value="C:cytoplasm"/>
    <property type="evidence" value="ECO:0007669"/>
    <property type="project" value="UniProtKB-SubCell"/>
</dbReference>
<dbReference type="GO" id="GO:0071424">
    <property type="term" value="F:rRNA (cytosine-N4-)-methyltransferase activity"/>
    <property type="evidence" value="ECO:0007669"/>
    <property type="project" value="UniProtKB-UniRule"/>
</dbReference>
<dbReference type="GO" id="GO:0070475">
    <property type="term" value="P:rRNA base methylation"/>
    <property type="evidence" value="ECO:0007669"/>
    <property type="project" value="UniProtKB-UniRule"/>
</dbReference>
<dbReference type="CDD" id="cd02440">
    <property type="entry name" value="AdoMet_MTases"/>
    <property type="match status" value="1"/>
</dbReference>
<dbReference type="Gene3D" id="1.10.150.170">
    <property type="entry name" value="Putative methyltransferase TM0872, insert domain"/>
    <property type="match status" value="1"/>
</dbReference>
<dbReference type="Gene3D" id="3.40.50.150">
    <property type="entry name" value="Vaccinia Virus protein VP39"/>
    <property type="match status" value="1"/>
</dbReference>
<dbReference type="HAMAP" id="MF_01007">
    <property type="entry name" value="16SrRNA_methyltr_H"/>
    <property type="match status" value="1"/>
</dbReference>
<dbReference type="InterPro" id="IPR002903">
    <property type="entry name" value="RsmH"/>
</dbReference>
<dbReference type="InterPro" id="IPR023397">
    <property type="entry name" value="SAM-dep_MeTrfase_MraW_recog"/>
</dbReference>
<dbReference type="InterPro" id="IPR029063">
    <property type="entry name" value="SAM-dependent_MTases_sf"/>
</dbReference>
<dbReference type="NCBIfam" id="TIGR00006">
    <property type="entry name" value="16S rRNA (cytosine(1402)-N(4))-methyltransferase RsmH"/>
    <property type="match status" value="1"/>
</dbReference>
<dbReference type="PANTHER" id="PTHR11265:SF0">
    <property type="entry name" value="12S RRNA N4-METHYLCYTIDINE METHYLTRANSFERASE"/>
    <property type="match status" value="1"/>
</dbReference>
<dbReference type="PANTHER" id="PTHR11265">
    <property type="entry name" value="S-ADENOSYL-METHYLTRANSFERASE MRAW"/>
    <property type="match status" value="1"/>
</dbReference>
<dbReference type="Pfam" id="PF01795">
    <property type="entry name" value="Methyltransf_5"/>
    <property type="match status" value="1"/>
</dbReference>
<dbReference type="PIRSF" id="PIRSF004486">
    <property type="entry name" value="MraW"/>
    <property type="match status" value="1"/>
</dbReference>
<dbReference type="SUPFAM" id="SSF81799">
    <property type="entry name" value="Putative methyltransferase TM0872, insert domain"/>
    <property type="match status" value="1"/>
</dbReference>
<dbReference type="SUPFAM" id="SSF53335">
    <property type="entry name" value="S-adenosyl-L-methionine-dependent methyltransferases"/>
    <property type="match status" value="1"/>
</dbReference>
<protein>
    <recommendedName>
        <fullName evidence="1">Ribosomal RNA small subunit methyltransferase H</fullName>
        <ecNumber evidence="1">2.1.1.199</ecNumber>
    </recommendedName>
    <alternativeName>
        <fullName evidence="1">16S rRNA m(4)C1402 methyltransferase</fullName>
    </alternativeName>
    <alternativeName>
        <fullName evidence="1">rRNA (cytosine-N(4)-)-methyltransferase RsmH</fullName>
    </alternativeName>
</protein>
<organism>
    <name type="scientific">Bartonella henselae (strain ATCC 49882 / DSM 28221 / CCUG 30454 / Houston 1)</name>
    <name type="common">Rochalimaea henselae</name>
    <dbReference type="NCBI Taxonomy" id="283166"/>
    <lineage>
        <taxon>Bacteria</taxon>
        <taxon>Pseudomonadati</taxon>
        <taxon>Pseudomonadota</taxon>
        <taxon>Alphaproteobacteria</taxon>
        <taxon>Hyphomicrobiales</taxon>
        <taxon>Bartonellaceae</taxon>
        <taxon>Bartonella</taxon>
    </lineage>
</organism>
<feature type="chain" id="PRO_0000108580" description="Ribosomal RNA small subunit methyltransferase H">
    <location>
        <begin position="1"/>
        <end position="346"/>
    </location>
</feature>
<feature type="binding site" evidence="1">
    <location>
        <begin position="53"/>
        <end position="55"/>
    </location>
    <ligand>
        <name>S-adenosyl-L-methionine</name>
        <dbReference type="ChEBI" id="CHEBI:59789"/>
    </ligand>
</feature>
<feature type="binding site" evidence="1">
    <location>
        <position position="70"/>
    </location>
    <ligand>
        <name>S-adenosyl-L-methionine</name>
        <dbReference type="ChEBI" id="CHEBI:59789"/>
    </ligand>
</feature>
<feature type="binding site" evidence="1">
    <location>
        <position position="97"/>
    </location>
    <ligand>
        <name>S-adenosyl-L-methionine</name>
        <dbReference type="ChEBI" id="CHEBI:59789"/>
    </ligand>
</feature>
<feature type="binding site" evidence="1">
    <location>
        <position position="114"/>
    </location>
    <ligand>
        <name>S-adenosyl-L-methionine</name>
        <dbReference type="ChEBI" id="CHEBI:59789"/>
    </ligand>
</feature>
<feature type="binding site" evidence="1">
    <location>
        <position position="121"/>
    </location>
    <ligand>
        <name>S-adenosyl-L-methionine</name>
        <dbReference type="ChEBI" id="CHEBI:59789"/>
    </ligand>
</feature>
<accession>Q6G2P7</accession>
<proteinExistence type="inferred from homology"/>
<reference key="1">
    <citation type="journal article" date="2004" name="Proc. Natl. Acad. Sci. U.S.A.">
        <title>The louse-borne human pathogen Bartonella quintana is a genomic derivative of the zoonotic agent Bartonella henselae.</title>
        <authorList>
            <person name="Alsmark U.C.M."/>
            <person name="Frank A.C."/>
            <person name="Karlberg E.O."/>
            <person name="Legault B.-A."/>
            <person name="Ardell D.H."/>
            <person name="Canbaeck B."/>
            <person name="Eriksson A.-S."/>
            <person name="Naeslund A.K."/>
            <person name="Handley S.A."/>
            <person name="Huvet M."/>
            <person name="La Scola B."/>
            <person name="Holmberg M."/>
            <person name="Andersson S.G.E."/>
        </authorList>
    </citation>
    <scope>NUCLEOTIDE SEQUENCE [LARGE SCALE GENOMIC DNA]</scope>
    <source>
        <strain>ATCC 49882 / DSM 28221 / CCUG 30454 / Houston 1</strain>
    </source>
</reference>
<evidence type="ECO:0000255" key="1">
    <source>
        <dbReference type="HAMAP-Rule" id="MF_01007"/>
    </source>
</evidence>
<name>RSMH_BARHE</name>
<gene>
    <name evidence="1" type="primary">rsmH</name>
    <name type="synonym">mraW</name>
    <name type="ordered locus">BH11320</name>
</gene>
<comment type="function">
    <text evidence="1">Specifically methylates the N4 position of cytidine in position 1402 (C1402) of 16S rRNA.</text>
</comment>
<comment type="catalytic activity">
    <reaction evidence="1">
        <text>cytidine(1402) in 16S rRNA + S-adenosyl-L-methionine = N(4)-methylcytidine(1402) in 16S rRNA + S-adenosyl-L-homocysteine + H(+)</text>
        <dbReference type="Rhea" id="RHEA:42928"/>
        <dbReference type="Rhea" id="RHEA-COMP:10286"/>
        <dbReference type="Rhea" id="RHEA-COMP:10287"/>
        <dbReference type="ChEBI" id="CHEBI:15378"/>
        <dbReference type="ChEBI" id="CHEBI:57856"/>
        <dbReference type="ChEBI" id="CHEBI:59789"/>
        <dbReference type="ChEBI" id="CHEBI:74506"/>
        <dbReference type="ChEBI" id="CHEBI:82748"/>
        <dbReference type="EC" id="2.1.1.199"/>
    </reaction>
</comment>
<comment type="subcellular location">
    <subcellularLocation>
        <location evidence="1">Cytoplasm</location>
    </subcellularLocation>
</comment>
<comment type="similarity">
    <text evidence="1">Belongs to the methyltransferase superfamily. RsmH family.</text>
</comment>